<comment type="function">
    <text evidence="1">Catalyzes the acyloin condensation reaction between C atoms 2 and 3 of pyruvate and glyceraldehyde 3-phosphate to yield 1-deoxy-D-xylulose-5-phosphate (DXP).</text>
</comment>
<comment type="catalytic activity">
    <reaction evidence="1">
        <text>D-glyceraldehyde 3-phosphate + pyruvate + H(+) = 1-deoxy-D-xylulose 5-phosphate + CO2</text>
        <dbReference type="Rhea" id="RHEA:12605"/>
        <dbReference type="ChEBI" id="CHEBI:15361"/>
        <dbReference type="ChEBI" id="CHEBI:15378"/>
        <dbReference type="ChEBI" id="CHEBI:16526"/>
        <dbReference type="ChEBI" id="CHEBI:57792"/>
        <dbReference type="ChEBI" id="CHEBI:59776"/>
        <dbReference type="EC" id="2.2.1.7"/>
    </reaction>
</comment>
<comment type="cofactor">
    <cofactor evidence="1">
        <name>Mg(2+)</name>
        <dbReference type="ChEBI" id="CHEBI:18420"/>
    </cofactor>
    <text evidence="1">Binds 1 Mg(2+) ion per subunit.</text>
</comment>
<comment type="cofactor">
    <cofactor evidence="1">
        <name>thiamine diphosphate</name>
        <dbReference type="ChEBI" id="CHEBI:58937"/>
    </cofactor>
    <text evidence="1">Binds 1 thiamine pyrophosphate per subunit.</text>
</comment>
<comment type="pathway">
    <text evidence="1">Metabolic intermediate biosynthesis; 1-deoxy-D-xylulose 5-phosphate biosynthesis; 1-deoxy-D-xylulose 5-phosphate from D-glyceraldehyde 3-phosphate and pyruvate: step 1/1.</text>
</comment>
<comment type="subunit">
    <text evidence="1">Homodimer.</text>
</comment>
<comment type="similarity">
    <text evidence="1">Belongs to the transketolase family. DXPS subfamily.</text>
</comment>
<comment type="sequence caution" evidence="2">
    <conflict type="erroneous initiation">
        <sequence resource="EMBL-CDS" id="AAM71583"/>
    </conflict>
</comment>
<evidence type="ECO:0000255" key="1">
    <source>
        <dbReference type="HAMAP-Rule" id="MF_00315"/>
    </source>
</evidence>
<evidence type="ECO:0000305" key="2"/>
<accession>Q8KFI9</accession>
<protein>
    <recommendedName>
        <fullName evidence="1">1-deoxy-D-xylulose-5-phosphate synthase</fullName>
        <ecNumber evidence="1">2.2.1.7</ecNumber>
    </recommendedName>
    <alternativeName>
        <fullName evidence="1">1-deoxyxylulose-5-phosphate synthase</fullName>
        <shortName evidence="1">DXP synthase</shortName>
        <shortName evidence="1">DXPS</shortName>
    </alternativeName>
</protein>
<feature type="chain" id="PRO_0000189102" description="1-deoxy-D-xylulose-5-phosphate synthase">
    <location>
        <begin position="1"/>
        <end position="635"/>
    </location>
</feature>
<feature type="binding site" evidence="1">
    <location>
        <position position="78"/>
    </location>
    <ligand>
        <name>thiamine diphosphate</name>
        <dbReference type="ChEBI" id="CHEBI:58937"/>
    </ligand>
</feature>
<feature type="binding site" evidence="1">
    <location>
        <begin position="119"/>
        <end position="121"/>
    </location>
    <ligand>
        <name>thiamine diphosphate</name>
        <dbReference type="ChEBI" id="CHEBI:58937"/>
    </ligand>
</feature>
<feature type="binding site" evidence="1">
    <location>
        <position position="150"/>
    </location>
    <ligand>
        <name>Mg(2+)</name>
        <dbReference type="ChEBI" id="CHEBI:18420"/>
    </ligand>
</feature>
<feature type="binding site" evidence="1">
    <location>
        <begin position="151"/>
        <end position="152"/>
    </location>
    <ligand>
        <name>thiamine diphosphate</name>
        <dbReference type="ChEBI" id="CHEBI:58937"/>
    </ligand>
</feature>
<feature type="binding site" evidence="1">
    <location>
        <position position="179"/>
    </location>
    <ligand>
        <name>Mg(2+)</name>
        <dbReference type="ChEBI" id="CHEBI:18420"/>
    </ligand>
</feature>
<feature type="binding site" evidence="1">
    <location>
        <position position="179"/>
    </location>
    <ligand>
        <name>thiamine diphosphate</name>
        <dbReference type="ChEBI" id="CHEBI:58937"/>
    </ligand>
</feature>
<feature type="binding site" evidence="1">
    <location>
        <position position="291"/>
    </location>
    <ligand>
        <name>thiamine diphosphate</name>
        <dbReference type="ChEBI" id="CHEBI:58937"/>
    </ligand>
</feature>
<feature type="binding site" evidence="1">
    <location>
        <position position="376"/>
    </location>
    <ligand>
        <name>thiamine diphosphate</name>
        <dbReference type="ChEBI" id="CHEBI:58937"/>
    </ligand>
</feature>
<organism>
    <name type="scientific">Chlorobaculum tepidum (strain ATCC 49652 / DSM 12025 / NBRC 103806 / TLS)</name>
    <name type="common">Chlorobium tepidum</name>
    <dbReference type="NCBI Taxonomy" id="194439"/>
    <lineage>
        <taxon>Bacteria</taxon>
        <taxon>Pseudomonadati</taxon>
        <taxon>Chlorobiota</taxon>
        <taxon>Chlorobiia</taxon>
        <taxon>Chlorobiales</taxon>
        <taxon>Chlorobiaceae</taxon>
        <taxon>Chlorobaculum</taxon>
    </lineage>
</organism>
<keyword id="KW-0414">Isoprene biosynthesis</keyword>
<keyword id="KW-0460">Magnesium</keyword>
<keyword id="KW-0479">Metal-binding</keyword>
<keyword id="KW-1185">Reference proteome</keyword>
<keyword id="KW-0784">Thiamine biosynthesis</keyword>
<keyword id="KW-0786">Thiamine pyrophosphate</keyword>
<keyword id="KW-0808">Transferase</keyword>
<sequence length="635" mass="68883">MISQAYPLLSSIHSPADLKKLSLHELELVAAECRKKVIELVSQNGGHFGSSLGVVELTVALHYVYQSPTDRIIWDVGHQAYVHKILTGRLAQMETNRRYHGLAGFPKRSESPHDAFGTGHASTSISAAAGLAAARDLAGRKEKVVAIIGDGSLTGGMAFEAMNHLGDTKSDVLVILNDNQMAISPSTGGLKNYLVNLTLNKTYNRLRKFVWDSLSLLHNEIGETAKTAVHRIEDGIKAAFTPGAYFEALGFRYFGPIDGHNMEQLIKALREMRQLHHPKLLHVITTKGKGFKPAEENQPKWHASVGGFDIETGKNVKAPGKPAKPKYQEVFGEALVELALKDPTITAITAAMPSGTSLDLFQQAIPSRCFDVGIAEQHAVTFAAGLACGGFKPVFAVYSTFLQRAYDQLIHDVALQNLHVVFAIDRAGLVGEDGPTHHGAFDLSYLNVVPNLTIMAPGDEQELRNMLYTALYDIKGPVAIRYPRGSGSGATLHKEFTPVPVGRGRILRDGKSVALLGIGTMSNRALETAALLEAAGLDPLVCDMRFLKPLDTEIIDMAASRCTHIVTIEENSIIGGFGSNVVNYLHHAHPGIKCISFGLPDAFVTHGSMDELYREVGLDAESLSGKILEFYKDKP</sequence>
<proteinExistence type="inferred from homology"/>
<dbReference type="EC" id="2.2.1.7" evidence="1"/>
<dbReference type="EMBL" id="AE006470">
    <property type="protein sequence ID" value="AAM71583.1"/>
    <property type="status" value="ALT_INIT"/>
    <property type="molecule type" value="Genomic_DNA"/>
</dbReference>
<dbReference type="RefSeq" id="NP_661241.1">
    <property type="nucleotide sequence ID" value="NC_002932.3"/>
</dbReference>
<dbReference type="RefSeq" id="WP_010932029.1">
    <property type="nucleotide sequence ID" value="NC_002932.3"/>
</dbReference>
<dbReference type="SMR" id="Q8KFI9"/>
<dbReference type="STRING" id="194439.CT0337"/>
<dbReference type="EnsemblBacteria" id="AAM71583">
    <property type="protein sequence ID" value="AAM71583"/>
    <property type="gene ID" value="CT0337"/>
</dbReference>
<dbReference type="KEGG" id="cte:CT0337"/>
<dbReference type="PATRIC" id="fig|194439.7.peg.327"/>
<dbReference type="eggNOG" id="COG1154">
    <property type="taxonomic scope" value="Bacteria"/>
</dbReference>
<dbReference type="HOGENOM" id="CLU_009227_1_4_10"/>
<dbReference type="OrthoDB" id="9803371at2"/>
<dbReference type="UniPathway" id="UPA00064">
    <property type="reaction ID" value="UER00091"/>
</dbReference>
<dbReference type="Proteomes" id="UP000001007">
    <property type="component" value="Chromosome"/>
</dbReference>
<dbReference type="GO" id="GO:0005829">
    <property type="term" value="C:cytosol"/>
    <property type="evidence" value="ECO:0007669"/>
    <property type="project" value="TreeGrafter"/>
</dbReference>
<dbReference type="GO" id="GO:0008661">
    <property type="term" value="F:1-deoxy-D-xylulose-5-phosphate synthase activity"/>
    <property type="evidence" value="ECO:0007669"/>
    <property type="project" value="UniProtKB-UniRule"/>
</dbReference>
<dbReference type="GO" id="GO:0000287">
    <property type="term" value="F:magnesium ion binding"/>
    <property type="evidence" value="ECO:0007669"/>
    <property type="project" value="UniProtKB-UniRule"/>
</dbReference>
<dbReference type="GO" id="GO:0030976">
    <property type="term" value="F:thiamine pyrophosphate binding"/>
    <property type="evidence" value="ECO:0007669"/>
    <property type="project" value="UniProtKB-UniRule"/>
</dbReference>
<dbReference type="GO" id="GO:0052865">
    <property type="term" value="P:1-deoxy-D-xylulose 5-phosphate biosynthetic process"/>
    <property type="evidence" value="ECO:0007669"/>
    <property type="project" value="UniProtKB-UniPathway"/>
</dbReference>
<dbReference type="GO" id="GO:0019288">
    <property type="term" value="P:isopentenyl diphosphate biosynthetic process, methylerythritol 4-phosphate pathway"/>
    <property type="evidence" value="ECO:0007669"/>
    <property type="project" value="TreeGrafter"/>
</dbReference>
<dbReference type="GO" id="GO:0016114">
    <property type="term" value="P:terpenoid biosynthetic process"/>
    <property type="evidence" value="ECO:0007669"/>
    <property type="project" value="UniProtKB-UniRule"/>
</dbReference>
<dbReference type="GO" id="GO:0009228">
    <property type="term" value="P:thiamine biosynthetic process"/>
    <property type="evidence" value="ECO:0007669"/>
    <property type="project" value="UniProtKB-UniRule"/>
</dbReference>
<dbReference type="CDD" id="cd02007">
    <property type="entry name" value="TPP_DXS"/>
    <property type="match status" value="1"/>
</dbReference>
<dbReference type="CDD" id="cd07033">
    <property type="entry name" value="TPP_PYR_DXS_TK_like"/>
    <property type="match status" value="1"/>
</dbReference>
<dbReference type="FunFam" id="3.40.50.920:FF:000002">
    <property type="entry name" value="1-deoxy-D-xylulose-5-phosphate synthase"/>
    <property type="match status" value="1"/>
</dbReference>
<dbReference type="FunFam" id="3.40.50.970:FF:000005">
    <property type="entry name" value="1-deoxy-D-xylulose-5-phosphate synthase"/>
    <property type="match status" value="1"/>
</dbReference>
<dbReference type="Gene3D" id="3.40.50.920">
    <property type="match status" value="1"/>
</dbReference>
<dbReference type="Gene3D" id="3.40.50.970">
    <property type="match status" value="2"/>
</dbReference>
<dbReference type="HAMAP" id="MF_00315">
    <property type="entry name" value="DXP_synth"/>
    <property type="match status" value="1"/>
</dbReference>
<dbReference type="InterPro" id="IPR005477">
    <property type="entry name" value="Dxylulose-5-P_synthase"/>
</dbReference>
<dbReference type="InterPro" id="IPR029061">
    <property type="entry name" value="THDP-binding"/>
</dbReference>
<dbReference type="InterPro" id="IPR009014">
    <property type="entry name" value="Transketo_C/PFOR_II"/>
</dbReference>
<dbReference type="InterPro" id="IPR005475">
    <property type="entry name" value="Transketolase-like_Pyr-bd"/>
</dbReference>
<dbReference type="InterPro" id="IPR020826">
    <property type="entry name" value="Transketolase_BS"/>
</dbReference>
<dbReference type="InterPro" id="IPR033248">
    <property type="entry name" value="Transketolase_C"/>
</dbReference>
<dbReference type="InterPro" id="IPR049557">
    <property type="entry name" value="Transketolase_CS"/>
</dbReference>
<dbReference type="NCBIfam" id="TIGR00204">
    <property type="entry name" value="dxs"/>
    <property type="match status" value="1"/>
</dbReference>
<dbReference type="NCBIfam" id="NF003933">
    <property type="entry name" value="PRK05444.2-2"/>
    <property type="match status" value="1"/>
</dbReference>
<dbReference type="PANTHER" id="PTHR43322">
    <property type="entry name" value="1-D-DEOXYXYLULOSE 5-PHOSPHATE SYNTHASE-RELATED"/>
    <property type="match status" value="1"/>
</dbReference>
<dbReference type="PANTHER" id="PTHR43322:SF5">
    <property type="entry name" value="1-DEOXY-D-XYLULOSE-5-PHOSPHATE SYNTHASE, CHLOROPLASTIC"/>
    <property type="match status" value="1"/>
</dbReference>
<dbReference type="Pfam" id="PF13292">
    <property type="entry name" value="DXP_synthase_N"/>
    <property type="match status" value="1"/>
</dbReference>
<dbReference type="Pfam" id="PF02779">
    <property type="entry name" value="Transket_pyr"/>
    <property type="match status" value="1"/>
</dbReference>
<dbReference type="Pfam" id="PF02780">
    <property type="entry name" value="Transketolase_C"/>
    <property type="match status" value="1"/>
</dbReference>
<dbReference type="SMART" id="SM00861">
    <property type="entry name" value="Transket_pyr"/>
    <property type="match status" value="1"/>
</dbReference>
<dbReference type="SUPFAM" id="SSF52518">
    <property type="entry name" value="Thiamin diphosphate-binding fold (THDP-binding)"/>
    <property type="match status" value="2"/>
</dbReference>
<dbReference type="SUPFAM" id="SSF52922">
    <property type="entry name" value="TK C-terminal domain-like"/>
    <property type="match status" value="1"/>
</dbReference>
<dbReference type="PROSITE" id="PS00801">
    <property type="entry name" value="TRANSKETOLASE_1"/>
    <property type="match status" value="1"/>
</dbReference>
<dbReference type="PROSITE" id="PS00802">
    <property type="entry name" value="TRANSKETOLASE_2"/>
    <property type="match status" value="1"/>
</dbReference>
<reference key="1">
    <citation type="journal article" date="2002" name="Proc. Natl. Acad. Sci. U.S.A.">
        <title>The complete genome sequence of Chlorobium tepidum TLS, a photosynthetic, anaerobic, green-sulfur bacterium.</title>
        <authorList>
            <person name="Eisen J.A."/>
            <person name="Nelson K.E."/>
            <person name="Paulsen I.T."/>
            <person name="Heidelberg J.F."/>
            <person name="Wu M."/>
            <person name="Dodson R.J."/>
            <person name="DeBoy R.T."/>
            <person name="Gwinn M.L."/>
            <person name="Nelson W.C."/>
            <person name="Haft D.H."/>
            <person name="Hickey E.K."/>
            <person name="Peterson J.D."/>
            <person name="Durkin A.S."/>
            <person name="Kolonay J.F."/>
            <person name="Yang F."/>
            <person name="Holt I.E."/>
            <person name="Umayam L.A."/>
            <person name="Mason T.M."/>
            <person name="Brenner M."/>
            <person name="Shea T.P."/>
            <person name="Parksey D.S."/>
            <person name="Nierman W.C."/>
            <person name="Feldblyum T.V."/>
            <person name="Hansen C.L."/>
            <person name="Craven M.B."/>
            <person name="Radune D."/>
            <person name="Vamathevan J.J."/>
            <person name="Khouri H.M."/>
            <person name="White O."/>
            <person name="Gruber T.M."/>
            <person name="Ketchum K.A."/>
            <person name="Venter J.C."/>
            <person name="Tettelin H."/>
            <person name="Bryant D.A."/>
            <person name="Fraser C.M."/>
        </authorList>
    </citation>
    <scope>NUCLEOTIDE SEQUENCE [LARGE SCALE GENOMIC DNA]</scope>
    <source>
        <strain>ATCC 49652 / DSM 12025 / NBRC 103806 / TLS</strain>
    </source>
</reference>
<gene>
    <name evidence="1" type="primary">dxs</name>
    <name type="ordered locus">CT0337</name>
</gene>
<name>DXS_CHLTE</name>